<feature type="signal peptide" evidence="1">
    <location>
        <begin position="1"/>
        <end position="29"/>
    </location>
</feature>
<feature type="chain" id="PRO_0000044624" description="L-cystine-binding protein TcyJ">
    <location>
        <begin position="30"/>
        <end position="266"/>
    </location>
</feature>
<keyword id="KW-0029">Amino-acid transport</keyword>
<keyword id="KW-0574">Periplasm</keyword>
<keyword id="KW-1185">Reference proteome</keyword>
<keyword id="KW-0732">Signal</keyword>
<keyword id="KW-0813">Transport</keyword>
<reference key="1">
    <citation type="journal article" date="2002" name="Proc. Natl. Acad. Sci. U.S.A.">
        <title>Extensive mosaic structure revealed by the complete genome sequence of uropathogenic Escherichia coli.</title>
        <authorList>
            <person name="Welch R.A."/>
            <person name="Burland V."/>
            <person name="Plunkett G. III"/>
            <person name="Redford P."/>
            <person name="Roesch P."/>
            <person name="Rasko D."/>
            <person name="Buckles E.L."/>
            <person name="Liou S.-R."/>
            <person name="Boutin A."/>
            <person name="Hackett J."/>
            <person name="Stroud D."/>
            <person name="Mayhew G.F."/>
            <person name="Rose D.J."/>
            <person name="Zhou S."/>
            <person name="Schwartz D.C."/>
            <person name="Perna N.T."/>
            <person name="Mobley H.L.T."/>
            <person name="Donnenberg M.S."/>
            <person name="Blattner F.R."/>
        </authorList>
    </citation>
    <scope>NUCLEOTIDE SEQUENCE [LARGE SCALE GENOMIC DNA]</scope>
    <source>
        <strain>CFT073 / ATCC 700928 / UPEC</strain>
    </source>
</reference>
<protein>
    <recommendedName>
        <fullName evidence="1">L-cystine-binding protein TcyJ</fullName>
        <shortName evidence="1">CBP</shortName>
    </recommendedName>
    <alternativeName>
        <fullName evidence="1">Protein FliY</fullName>
    </alternativeName>
</protein>
<comment type="function">
    <text evidence="1">Part of the ABC transporter complex TcyJLN involved in L-cystine import. Binds cystine.</text>
</comment>
<comment type="subunit">
    <text evidence="1">The complex is composed of two ATP-binding proteins (TcyN), two transmembrane proteins (TcyL) and a solute-binding protein (TcyJ).</text>
</comment>
<comment type="subcellular location">
    <subcellularLocation>
        <location evidence="1">Periplasm</location>
    </subcellularLocation>
</comment>
<comment type="similarity">
    <text evidence="2">Belongs to the bacterial solute-binding protein 3 family.</text>
</comment>
<comment type="sequence caution" evidence="2">
    <conflict type="erroneous initiation">
        <sequence resource="EMBL-CDS" id="AAN80794"/>
    </conflict>
</comment>
<organism>
    <name type="scientific">Escherichia coli O6:H1 (strain CFT073 / ATCC 700928 / UPEC)</name>
    <dbReference type="NCBI Taxonomy" id="199310"/>
    <lineage>
        <taxon>Bacteria</taxon>
        <taxon>Pseudomonadati</taxon>
        <taxon>Pseudomonadota</taxon>
        <taxon>Gammaproteobacteria</taxon>
        <taxon>Enterobacterales</taxon>
        <taxon>Enterobacteriaceae</taxon>
        <taxon>Escherichia</taxon>
    </lineage>
</organism>
<gene>
    <name evidence="1" type="primary">tcyJ</name>
    <name type="synonym">fliY</name>
    <name type="ordered locus">c2335</name>
</gene>
<accession>P0AEN0</accession>
<accession>P39174</accession>
<evidence type="ECO:0000250" key="1">
    <source>
        <dbReference type="UniProtKB" id="P0AEM9"/>
    </source>
</evidence>
<evidence type="ECO:0000305" key="2"/>
<name>TCYJ_ECOL6</name>
<sequence length="266" mass="29039">MKLAHLGRQALMGVMAVALVAGMSVKSFADEGLLNKVKERGTLLVGLEGTYPPFSFQGDDGKLTGFEVEFAQQLAKHLGVEASLKPTKWDGMLASLDSKRIDVVINQVTISDERKKKYDFSTPYTISGIQALVKKGNEGTIKTADDLKGKKVGVGLGTNYEEWLRQNVQGVDVRTYDDDPTKYQDLRVGRIDAILVDRLAALDLVKKTNDTLAVTGEAFSRQESGVALRKGNEDLLKAVNDAIAEMQKDGTLQALSEKWFGADVTK</sequence>
<proteinExistence type="inferred from homology"/>
<dbReference type="EMBL" id="AE014075">
    <property type="protein sequence ID" value="AAN80794.1"/>
    <property type="status" value="ALT_INIT"/>
    <property type="molecule type" value="Genomic_DNA"/>
</dbReference>
<dbReference type="RefSeq" id="WP_001296168.1">
    <property type="nucleotide sequence ID" value="NZ_CP051263.1"/>
</dbReference>
<dbReference type="SMR" id="P0AEN0"/>
<dbReference type="STRING" id="199310.c2335"/>
<dbReference type="DNASU" id="1036969"/>
<dbReference type="GeneID" id="93776227"/>
<dbReference type="KEGG" id="ecc:c2335"/>
<dbReference type="eggNOG" id="COG0834">
    <property type="taxonomic scope" value="Bacteria"/>
</dbReference>
<dbReference type="HOGENOM" id="CLU_019602_18_5_6"/>
<dbReference type="Proteomes" id="UP000001410">
    <property type="component" value="Chromosome"/>
</dbReference>
<dbReference type="GO" id="GO:0016020">
    <property type="term" value="C:membrane"/>
    <property type="evidence" value="ECO:0007669"/>
    <property type="project" value="InterPro"/>
</dbReference>
<dbReference type="GO" id="GO:0030288">
    <property type="term" value="C:outer membrane-bounded periplasmic space"/>
    <property type="evidence" value="ECO:0007669"/>
    <property type="project" value="UniProtKB-ARBA"/>
</dbReference>
<dbReference type="GO" id="GO:0015276">
    <property type="term" value="F:ligand-gated monoatomic ion channel activity"/>
    <property type="evidence" value="ECO:0007669"/>
    <property type="project" value="InterPro"/>
</dbReference>
<dbReference type="GO" id="GO:0006865">
    <property type="term" value="P:amino acid transport"/>
    <property type="evidence" value="ECO:0007669"/>
    <property type="project" value="UniProtKB-KW"/>
</dbReference>
<dbReference type="CDD" id="cd13712">
    <property type="entry name" value="PBP2_FliY"/>
    <property type="match status" value="1"/>
</dbReference>
<dbReference type="FunFam" id="3.40.190.10:FF:000067">
    <property type="entry name" value="Cystine ABC transporter substrate-binding protein"/>
    <property type="match status" value="1"/>
</dbReference>
<dbReference type="Gene3D" id="3.40.190.10">
    <property type="entry name" value="Periplasmic binding protein-like II"/>
    <property type="match status" value="2"/>
</dbReference>
<dbReference type="InterPro" id="IPR001320">
    <property type="entry name" value="Iontro_rcpt_C"/>
</dbReference>
<dbReference type="InterPro" id="IPR018313">
    <property type="entry name" value="SBP_3_CS"/>
</dbReference>
<dbReference type="InterPro" id="IPR001638">
    <property type="entry name" value="Solute-binding_3/MltF_N"/>
</dbReference>
<dbReference type="NCBIfam" id="NF008426">
    <property type="entry name" value="PRK11260.1"/>
    <property type="match status" value="1"/>
</dbReference>
<dbReference type="PANTHER" id="PTHR35936:SF35">
    <property type="entry name" value="L-CYSTINE-BINDING PROTEIN TCYJ"/>
    <property type="match status" value="1"/>
</dbReference>
<dbReference type="PANTHER" id="PTHR35936">
    <property type="entry name" value="MEMBRANE-BOUND LYTIC MUREIN TRANSGLYCOSYLASE F"/>
    <property type="match status" value="1"/>
</dbReference>
<dbReference type="Pfam" id="PF00497">
    <property type="entry name" value="SBP_bac_3"/>
    <property type="match status" value="1"/>
</dbReference>
<dbReference type="SMART" id="SM00062">
    <property type="entry name" value="PBPb"/>
    <property type="match status" value="1"/>
</dbReference>
<dbReference type="SMART" id="SM00079">
    <property type="entry name" value="PBPe"/>
    <property type="match status" value="1"/>
</dbReference>
<dbReference type="SUPFAM" id="SSF53850">
    <property type="entry name" value="Periplasmic binding protein-like II"/>
    <property type="match status" value="1"/>
</dbReference>
<dbReference type="PROSITE" id="PS01039">
    <property type="entry name" value="SBP_BACTERIAL_3"/>
    <property type="match status" value="1"/>
</dbReference>